<reference key="1">
    <citation type="journal article" date="1999" name="DNA Res.">
        <title>Complete genome sequence of an aerobic hyper-thermophilic crenarchaeon, Aeropyrum pernix K1.</title>
        <authorList>
            <person name="Kawarabayasi Y."/>
            <person name="Hino Y."/>
            <person name="Horikawa H."/>
            <person name="Yamazaki S."/>
            <person name="Haikawa Y."/>
            <person name="Jin-no K."/>
            <person name="Takahashi M."/>
            <person name="Sekine M."/>
            <person name="Baba S."/>
            <person name="Ankai A."/>
            <person name="Kosugi H."/>
            <person name="Hosoyama A."/>
            <person name="Fukui S."/>
            <person name="Nagai Y."/>
            <person name="Nishijima K."/>
            <person name="Nakazawa H."/>
            <person name="Takamiya M."/>
            <person name="Masuda S."/>
            <person name="Funahashi T."/>
            <person name="Tanaka T."/>
            <person name="Kudoh Y."/>
            <person name="Yamazaki J."/>
            <person name="Kushida N."/>
            <person name="Oguchi A."/>
            <person name="Aoki K."/>
            <person name="Kubota K."/>
            <person name="Nakamura Y."/>
            <person name="Nomura N."/>
            <person name="Sako Y."/>
            <person name="Kikuchi H."/>
        </authorList>
    </citation>
    <scope>NUCLEOTIDE SEQUENCE [LARGE SCALE GENOMIC DNA]</scope>
    <source>
        <strain>ATCC 700893 / DSM 11879 / JCM 9820 / NBRC 100138 / K1</strain>
    </source>
</reference>
<evidence type="ECO:0000250" key="1"/>
<evidence type="ECO:0000305" key="2"/>
<keyword id="KW-0143">Chaperone</keyword>
<keyword id="KW-0963">Cytoplasm</keyword>
<keyword id="KW-1185">Reference proteome</keyword>
<dbReference type="EMBL" id="BA000002">
    <property type="protein sequence ID" value="BAA80069.2"/>
    <property type="molecule type" value="Genomic_DNA"/>
</dbReference>
<dbReference type="PIR" id="E72708">
    <property type="entry name" value="E72708"/>
</dbReference>
<dbReference type="RefSeq" id="WP_010866161.1">
    <property type="nucleotide sequence ID" value="NC_000854.2"/>
</dbReference>
<dbReference type="SMR" id="Q9YD28"/>
<dbReference type="STRING" id="272557.APE_1084.1"/>
<dbReference type="EnsemblBacteria" id="BAA80069">
    <property type="protein sequence ID" value="BAA80069"/>
    <property type="gene ID" value="APE_1084.1"/>
</dbReference>
<dbReference type="GeneID" id="1445780"/>
<dbReference type="KEGG" id="ape:APE_1084.1"/>
<dbReference type="eggNOG" id="arCOG01341">
    <property type="taxonomic scope" value="Archaea"/>
</dbReference>
<dbReference type="Proteomes" id="UP000002518">
    <property type="component" value="Chromosome"/>
</dbReference>
<dbReference type="GO" id="GO:0005737">
    <property type="term" value="C:cytoplasm"/>
    <property type="evidence" value="ECO:0007669"/>
    <property type="project" value="UniProtKB-SubCell"/>
</dbReference>
<dbReference type="GO" id="GO:0016272">
    <property type="term" value="C:prefoldin complex"/>
    <property type="evidence" value="ECO:0007669"/>
    <property type="project" value="UniProtKB-UniRule"/>
</dbReference>
<dbReference type="GO" id="GO:0051082">
    <property type="term" value="F:unfolded protein binding"/>
    <property type="evidence" value="ECO:0007669"/>
    <property type="project" value="UniProtKB-UniRule"/>
</dbReference>
<dbReference type="GO" id="GO:0006457">
    <property type="term" value="P:protein folding"/>
    <property type="evidence" value="ECO:0007669"/>
    <property type="project" value="UniProtKB-UniRule"/>
</dbReference>
<dbReference type="CDD" id="cd00584">
    <property type="entry name" value="Prefoldin_alpha"/>
    <property type="match status" value="1"/>
</dbReference>
<dbReference type="Gene3D" id="1.10.287.370">
    <property type="match status" value="1"/>
</dbReference>
<dbReference type="HAMAP" id="MF_00308">
    <property type="entry name" value="PfdA"/>
    <property type="match status" value="1"/>
</dbReference>
<dbReference type="InterPro" id="IPR011599">
    <property type="entry name" value="PFD_alpha_archaea"/>
</dbReference>
<dbReference type="InterPro" id="IPR009053">
    <property type="entry name" value="Prefoldin"/>
</dbReference>
<dbReference type="InterPro" id="IPR004127">
    <property type="entry name" value="Prefoldin_subunit_alpha"/>
</dbReference>
<dbReference type="Pfam" id="PF02996">
    <property type="entry name" value="Prefoldin"/>
    <property type="match status" value="1"/>
</dbReference>
<dbReference type="SUPFAM" id="SSF46579">
    <property type="entry name" value="Prefoldin"/>
    <property type="match status" value="1"/>
</dbReference>
<name>PFDA_AERPE</name>
<protein>
    <recommendedName>
        <fullName>Prefoldin subunit alpha</fullName>
    </recommendedName>
    <alternativeName>
        <fullName>GimC subunit alpha</fullName>
    </alternativeName>
</protein>
<gene>
    <name type="primary">pfdA</name>
    <name type="ordered locus">APE_1084.1</name>
</gene>
<sequence>MAQQMPSPEEIAAQLQMIRDQIAELQGVLAQLELRLRSVQAAKETVEKAAGQDGETLFPGDPELNTILKARLLEPGKAIVHLGLNVYAKLDTAKATEILAKKEDALKRSLETLKQELDKLSRTHDQYLQLLQALTAGQAAQQAGQQQKQGS</sequence>
<accession>Q9YD28</accession>
<comment type="function">
    <text evidence="1">Molecular chaperone capable of stabilizing a range of proteins. Seems to fulfill an ATP-independent, HSP70-like function in archaeal de novo protein folding (By similarity).</text>
</comment>
<comment type="subunit">
    <text evidence="1">Heterohexamer of two alpha and four beta subunits.</text>
</comment>
<comment type="subcellular location">
    <subcellularLocation>
        <location evidence="1">Cytoplasm</location>
    </subcellularLocation>
</comment>
<comment type="similarity">
    <text evidence="2">Belongs to the prefoldin subunit alpha family.</text>
</comment>
<organism>
    <name type="scientific">Aeropyrum pernix (strain ATCC 700893 / DSM 11879 / JCM 9820 / NBRC 100138 / K1)</name>
    <dbReference type="NCBI Taxonomy" id="272557"/>
    <lineage>
        <taxon>Archaea</taxon>
        <taxon>Thermoproteota</taxon>
        <taxon>Thermoprotei</taxon>
        <taxon>Desulfurococcales</taxon>
        <taxon>Desulfurococcaceae</taxon>
        <taxon>Aeropyrum</taxon>
    </lineage>
</organism>
<feature type="chain" id="PRO_0000153669" description="Prefoldin subunit alpha">
    <location>
        <begin position="1"/>
        <end position="151"/>
    </location>
</feature>
<proteinExistence type="inferred from homology"/>